<feature type="chain" id="PRO_0000398166" description="Phosphate transporter PHO1-2">
    <location>
        <begin position="1"/>
        <end position="815"/>
    </location>
</feature>
<feature type="topological domain" description="Cytoplasmic" evidence="1">
    <location>
        <begin position="1"/>
        <end position="421"/>
    </location>
</feature>
<feature type="transmembrane region" description="Helical" evidence="1">
    <location>
        <begin position="422"/>
        <end position="442"/>
    </location>
</feature>
<feature type="topological domain" description="Extracellular" evidence="1">
    <location>
        <begin position="443"/>
        <end position="458"/>
    </location>
</feature>
<feature type="transmembrane region" description="Helical" evidence="1">
    <location>
        <begin position="459"/>
        <end position="479"/>
    </location>
</feature>
<feature type="topological domain" description="Cytoplasmic" evidence="1">
    <location>
        <begin position="480"/>
        <end position="508"/>
    </location>
</feature>
<feature type="transmembrane region" description="Helical" evidence="1">
    <location>
        <begin position="509"/>
        <end position="529"/>
    </location>
</feature>
<feature type="topological domain" description="Extracellular" evidence="1">
    <location>
        <begin position="530"/>
        <end position="538"/>
    </location>
</feature>
<feature type="transmembrane region" description="Helical" evidence="1">
    <location>
        <begin position="539"/>
        <end position="559"/>
    </location>
</feature>
<feature type="topological domain" description="Cytoplasmic" evidence="1">
    <location>
        <begin position="560"/>
        <end position="686"/>
    </location>
</feature>
<feature type="transmembrane region" description="Helical" evidence="1">
    <location>
        <begin position="687"/>
        <end position="707"/>
    </location>
</feature>
<feature type="topological domain" description="Extracellular" evidence="1">
    <location>
        <begin position="708"/>
        <end position="734"/>
    </location>
</feature>
<feature type="transmembrane region" description="Helical" evidence="1">
    <location>
        <begin position="735"/>
        <end position="751"/>
    </location>
</feature>
<feature type="topological domain" description="Cytoplasmic" evidence="1">
    <location>
        <begin position="752"/>
        <end position="815"/>
    </location>
</feature>
<feature type="domain" description="SPX" evidence="3">
    <location>
        <begin position="2"/>
        <end position="368"/>
    </location>
</feature>
<feature type="domain" description="EXS" evidence="2">
    <location>
        <begin position="624"/>
        <end position="815"/>
    </location>
</feature>
<feature type="region of interest" description="Disordered" evidence="4">
    <location>
        <begin position="83"/>
        <end position="108"/>
    </location>
</feature>
<feature type="region of interest" description="Disordered" evidence="4">
    <location>
        <begin position="166"/>
        <end position="213"/>
    </location>
</feature>
<feature type="region of interest" description="Disordered" evidence="4">
    <location>
        <begin position="242"/>
        <end position="266"/>
    </location>
</feature>
<feature type="compositionally biased region" description="Basic and acidic residues" evidence="4">
    <location>
        <begin position="97"/>
        <end position="108"/>
    </location>
</feature>
<feature type="compositionally biased region" description="Low complexity" evidence="4">
    <location>
        <begin position="183"/>
        <end position="201"/>
    </location>
</feature>
<feature type="compositionally biased region" description="Polar residues" evidence="4">
    <location>
        <begin position="202"/>
        <end position="213"/>
    </location>
</feature>
<feature type="compositionally biased region" description="Basic and acidic residues" evidence="4">
    <location>
        <begin position="243"/>
        <end position="254"/>
    </location>
</feature>
<feature type="compositionally biased region" description="Gly residues" evidence="4">
    <location>
        <begin position="255"/>
        <end position="266"/>
    </location>
</feature>
<sequence length="815" mass="91524">MVKFSREYEASIIPEWKAAFVDYKRLKKLIKRIKVTRRDDSFAAANAAAAADHLLPPPPAEKEAGGYGFSILDPVRAIAARFSAGQQPSASEDEECPDRGELVRSTDKHEREFMERADEELEKVNAFYTGQEAELLARGDALLEQLRILADVKRILADHAAARRARGLARSRSMPPPPPSSSPPSSVHGSSGRYLLSGLSSPQSMSDGSLELQQAQVSEGAAVADEVMAALERNGVSFVGLAGKKDGKTKDGSGKGRGGGGGGGGGVLQLPATVRIDIPATSPGRAALKVWEELVNVLRKDGADPAAAFVHRKKIQHAEKNIRDAFMALYRGLELLKKFSSLNVKAFTKILKKFVKVSEQQRATDLFSEKVKRSPFSSSDKVLQLADEVECIFMKHFTGNDRKVAMKYLKPQQPRNTHMITFLVGLFTGTFVSLFIIYAILAHVSGIFTSTGNSAYMEIVYHVFSMFALISLHIFLYGCNLFMWKNTRINHNFIFDFSSNTALTHRDAFLMSASIMCTVVAALVINLFLKNAGVAYANALPGALLLLSTGVLFCPFDIFYRSTRYCFMRVMRNIIFSPFYKVLMADFFMADQLTSQIPLLRHMEFTACYFMAGSFRTHPYETCTSGQQYKHLAYVISFLPYFWRALQCLRRYLEEGHDINQLANAGKYVSAMVAAAVRFKYAATPTPFWVWMVIISSSGATIYQLYWDFVKDWGFLNPKSKNRWLRNELILKNKSIYYVSMMLNLALRLAWTESVMKIHIGKVESRLLDFSLASLEIIRRGHWNFYRLENEHLNNVGKFRAVKTVPLPFRELETD</sequence>
<accession>Q6K991</accession>
<accession>A0A0N7KGA9</accession>
<dbReference type="EMBL" id="AP003996">
    <property type="protein sequence ID" value="BAD19144.1"/>
    <property type="molecule type" value="Genomic_DNA"/>
</dbReference>
<dbReference type="EMBL" id="AP004064">
    <property type="protein sequence ID" value="BAD19259.1"/>
    <property type="molecule type" value="Genomic_DNA"/>
</dbReference>
<dbReference type="EMBL" id="AP008208">
    <property type="protein sequence ID" value="BAF10378.1"/>
    <property type="molecule type" value="Genomic_DNA"/>
</dbReference>
<dbReference type="EMBL" id="AP014958">
    <property type="protein sequence ID" value="BAS81505.1"/>
    <property type="molecule type" value="Genomic_DNA"/>
</dbReference>
<dbReference type="EMBL" id="CM000139">
    <property type="protein sequence ID" value="EEE58023.1"/>
    <property type="molecule type" value="Genomic_DNA"/>
</dbReference>
<dbReference type="EMBL" id="AK100323">
    <property type="protein sequence ID" value="BAG94551.1"/>
    <property type="molecule type" value="mRNA"/>
</dbReference>
<dbReference type="RefSeq" id="XP_015626153.1">
    <property type="nucleotide sequence ID" value="XM_015770667.1"/>
</dbReference>
<dbReference type="SMR" id="Q6K991"/>
<dbReference type="FunCoup" id="Q6K991">
    <property type="interactions" value="2088"/>
</dbReference>
<dbReference type="STRING" id="39947.Q6K991"/>
<dbReference type="PaxDb" id="39947-Q6K991"/>
<dbReference type="EnsemblPlants" id="Os02t0809800-01">
    <property type="protein sequence ID" value="Os02t0809800-01"/>
    <property type="gene ID" value="Os02g0809800"/>
</dbReference>
<dbReference type="Gramene" id="Os02t0809800-01">
    <property type="protein sequence ID" value="Os02t0809800-01"/>
    <property type="gene ID" value="Os02g0809800"/>
</dbReference>
<dbReference type="KEGG" id="dosa:Os02g0809800"/>
<dbReference type="eggNOG" id="KOG1162">
    <property type="taxonomic scope" value="Eukaryota"/>
</dbReference>
<dbReference type="HOGENOM" id="CLU_006116_2_0_1"/>
<dbReference type="InParanoid" id="Q6K991"/>
<dbReference type="OMA" id="ETSHFYT"/>
<dbReference type="OrthoDB" id="9970435at2759"/>
<dbReference type="Proteomes" id="UP000000763">
    <property type="component" value="Chromosome 2"/>
</dbReference>
<dbReference type="Proteomes" id="UP000007752">
    <property type="component" value="Chromosome 2"/>
</dbReference>
<dbReference type="Proteomes" id="UP000059680">
    <property type="component" value="Chromosome 2"/>
</dbReference>
<dbReference type="GO" id="GO:0005886">
    <property type="term" value="C:plasma membrane"/>
    <property type="evidence" value="ECO:0007669"/>
    <property type="project" value="UniProtKB-SubCell"/>
</dbReference>
<dbReference type="GO" id="GO:0005802">
    <property type="term" value="C:trans-Golgi network"/>
    <property type="evidence" value="ECO:0000318"/>
    <property type="project" value="GO_Central"/>
</dbReference>
<dbReference type="GO" id="GO:0000822">
    <property type="term" value="F:inositol hexakisphosphate binding"/>
    <property type="evidence" value="ECO:0000318"/>
    <property type="project" value="GO_Central"/>
</dbReference>
<dbReference type="GO" id="GO:0005315">
    <property type="term" value="F:phosphate transmembrane transporter activity"/>
    <property type="evidence" value="ECO:0000318"/>
    <property type="project" value="GO_Central"/>
</dbReference>
<dbReference type="GO" id="GO:0016036">
    <property type="term" value="P:cellular response to phosphate starvation"/>
    <property type="evidence" value="ECO:0000318"/>
    <property type="project" value="GO_Central"/>
</dbReference>
<dbReference type="GO" id="GO:0030643">
    <property type="term" value="P:intracellular phosphate ion homeostasis"/>
    <property type="evidence" value="ECO:0007669"/>
    <property type="project" value="EnsemblPlants"/>
</dbReference>
<dbReference type="GO" id="GO:0006817">
    <property type="term" value="P:phosphate ion transport"/>
    <property type="evidence" value="ECO:0000315"/>
    <property type="project" value="UniProtKB"/>
</dbReference>
<dbReference type="GO" id="GO:0006799">
    <property type="term" value="P:polyphosphate biosynthetic process"/>
    <property type="evidence" value="ECO:0007669"/>
    <property type="project" value="EnsemblPlants"/>
</dbReference>
<dbReference type="CDD" id="cd14476">
    <property type="entry name" value="SPX_PHO1_like"/>
    <property type="match status" value="1"/>
</dbReference>
<dbReference type="InterPro" id="IPR004342">
    <property type="entry name" value="EXS_C"/>
</dbReference>
<dbReference type="InterPro" id="IPR052486">
    <property type="entry name" value="PHO1"/>
</dbReference>
<dbReference type="InterPro" id="IPR034092">
    <property type="entry name" value="PHO1_SPX"/>
</dbReference>
<dbReference type="InterPro" id="IPR004331">
    <property type="entry name" value="SPX_dom"/>
</dbReference>
<dbReference type="PANTHER" id="PTHR48477">
    <property type="entry name" value="PHOSPHATE TRANSPORTER PHO1"/>
    <property type="match status" value="1"/>
</dbReference>
<dbReference type="PANTHER" id="PTHR48477:SF1">
    <property type="entry name" value="PHOSPHATE TRANSPORTER PHO1"/>
    <property type="match status" value="1"/>
</dbReference>
<dbReference type="Pfam" id="PF03124">
    <property type="entry name" value="EXS"/>
    <property type="match status" value="1"/>
</dbReference>
<dbReference type="Pfam" id="PF03105">
    <property type="entry name" value="SPX"/>
    <property type="match status" value="1"/>
</dbReference>
<dbReference type="PROSITE" id="PS51380">
    <property type="entry name" value="EXS"/>
    <property type="match status" value="1"/>
</dbReference>
<dbReference type="PROSITE" id="PS51382">
    <property type="entry name" value="SPX"/>
    <property type="match status" value="1"/>
</dbReference>
<protein>
    <recommendedName>
        <fullName>Phosphate transporter PHO1-2</fullName>
    </recommendedName>
    <alternativeName>
        <fullName>Protein PHO1-2</fullName>
        <shortName>OsPHO1;2</shortName>
    </alternativeName>
</protein>
<comment type="function">
    <text evidence="5">Involved in the transfer of inorganic phosphate (Pi) from roots to shoots.</text>
</comment>
<comment type="subcellular location">
    <subcellularLocation>
        <location evidence="6">Cell membrane</location>
        <topology evidence="6">Multi-pass membrane protein</topology>
    </subcellularLocation>
</comment>
<comment type="tissue specificity">
    <text evidence="5">Specifically expressed in roots.</text>
</comment>
<comment type="induction">
    <text evidence="5">Not induced by Pi deficiency in roots.</text>
</comment>
<comment type="disruption phenotype">
    <text evidence="5">Strong decrease in root and shoot biomass and Pi content. 25-fold reduction in Pi transfer from roots to shoots.</text>
</comment>
<comment type="similarity">
    <text evidence="6">Belongs to the SYG1 (TC 2.A.94) family.</text>
</comment>
<proteinExistence type="evidence at transcript level"/>
<name>PHO12_ORYSJ</name>
<keyword id="KW-1003">Cell membrane</keyword>
<keyword id="KW-0472">Membrane</keyword>
<keyword id="KW-0592">Phosphate transport</keyword>
<keyword id="KW-1185">Reference proteome</keyword>
<keyword id="KW-0812">Transmembrane</keyword>
<keyword id="KW-1133">Transmembrane helix</keyword>
<keyword id="KW-0813">Transport</keyword>
<organism>
    <name type="scientific">Oryza sativa subsp. japonica</name>
    <name type="common">Rice</name>
    <dbReference type="NCBI Taxonomy" id="39947"/>
    <lineage>
        <taxon>Eukaryota</taxon>
        <taxon>Viridiplantae</taxon>
        <taxon>Streptophyta</taxon>
        <taxon>Embryophyta</taxon>
        <taxon>Tracheophyta</taxon>
        <taxon>Spermatophyta</taxon>
        <taxon>Magnoliopsida</taxon>
        <taxon>Liliopsida</taxon>
        <taxon>Poales</taxon>
        <taxon>Poaceae</taxon>
        <taxon>BOP clade</taxon>
        <taxon>Oryzoideae</taxon>
        <taxon>Oryzeae</taxon>
        <taxon>Oryzinae</taxon>
        <taxon>Oryza</taxon>
        <taxon>Oryza sativa</taxon>
    </lineage>
</organism>
<evidence type="ECO:0000255" key="1"/>
<evidence type="ECO:0000255" key="2">
    <source>
        <dbReference type="PROSITE-ProRule" id="PRU00712"/>
    </source>
</evidence>
<evidence type="ECO:0000255" key="3">
    <source>
        <dbReference type="PROSITE-ProRule" id="PRU00714"/>
    </source>
</evidence>
<evidence type="ECO:0000256" key="4">
    <source>
        <dbReference type="SAM" id="MobiDB-lite"/>
    </source>
</evidence>
<evidence type="ECO:0000269" key="5">
    <source>
    </source>
</evidence>
<evidence type="ECO:0000305" key="6"/>
<gene>
    <name type="primary">PHO1-2</name>
    <name type="ordered locus">Os02g0809800</name>
    <name type="ordered locus">LOC_Os02g56510</name>
    <name type="ORF">OJ1112_G06.31</name>
    <name type="ORF">OJ1520_C09.43</name>
    <name type="ORF">OsJ_08812</name>
</gene>
<reference key="1">
    <citation type="journal article" date="2005" name="Nature">
        <title>The map-based sequence of the rice genome.</title>
        <authorList>
            <consortium name="International rice genome sequencing project (IRGSP)"/>
        </authorList>
    </citation>
    <scope>NUCLEOTIDE SEQUENCE [LARGE SCALE GENOMIC DNA]</scope>
    <source>
        <strain>cv. Nipponbare</strain>
    </source>
</reference>
<reference key="2">
    <citation type="journal article" date="2008" name="Nucleic Acids Res.">
        <title>The rice annotation project database (RAP-DB): 2008 update.</title>
        <authorList>
            <consortium name="The rice annotation project (RAP)"/>
        </authorList>
    </citation>
    <scope>GENOME REANNOTATION</scope>
    <source>
        <strain>cv. Nipponbare</strain>
    </source>
</reference>
<reference key="3">
    <citation type="journal article" date="2013" name="Rice">
        <title>Improvement of the Oryza sativa Nipponbare reference genome using next generation sequence and optical map data.</title>
        <authorList>
            <person name="Kawahara Y."/>
            <person name="de la Bastide M."/>
            <person name="Hamilton J.P."/>
            <person name="Kanamori H."/>
            <person name="McCombie W.R."/>
            <person name="Ouyang S."/>
            <person name="Schwartz D.C."/>
            <person name="Tanaka T."/>
            <person name="Wu J."/>
            <person name="Zhou S."/>
            <person name="Childs K.L."/>
            <person name="Davidson R.M."/>
            <person name="Lin H."/>
            <person name="Quesada-Ocampo L."/>
            <person name="Vaillancourt B."/>
            <person name="Sakai H."/>
            <person name="Lee S.S."/>
            <person name="Kim J."/>
            <person name="Numa H."/>
            <person name="Itoh T."/>
            <person name="Buell C.R."/>
            <person name="Matsumoto T."/>
        </authorList>
    </citation>
    <scope>GENOME REANNOTATION</scope>
    <source>
        <strain>cv. Nipponbare</strain>
    </source>
</reference>
<reference key="4">
    <citation type="journal article" date="2005" name="PLoS Biol.">
        <title>The genomes of Oryza sativa: a history of duplications.</title>
        <authorList>
            <person name="Yu J."/>
            <person name="Wang J."/>
            <person name="Lin W."/>
            <person name="Li S."/>
            <person name="Li H."/>
            <person name="Zhou J."/>
            <person name="Ni P."/>
            <person name="Dong W."/>
            <person name="Hu S."/>
            <person name="Zeng C."/>
            <person name="Zhang J."/>
            <person name="Zhang Y."/>
            <person name="Li R."/>
            <person name="Xu Z."/>
            <person name="Li S."/>
            <person name="Li X."/>
            <person name="Zheng H."/>
            <person name="Cong L."/>
            <person name="Lin L."/>
            <person name="Yin J."/>
            <person name="Geng J."/>
            <person name="Li G."/>
            <person name="Shi J."/>
            <person name="Liu J."/>
            <person name="Lv H."/>
            <person name="Li J."/>
            <person name="Wang J."/>
            <person name="Deng Y."/>
            <person name="Ran L."/>
            <person name="Shi X."/>
            <person name="Wang X."/>
            <person name="Wu Q."/>
            <person name="Li C."/>
            <person name="Ren X."/>
            <person name="Wang J."/>
            <person name="Wang X."/>
            <person name="Li D."/>
            <person name="Liu D."/>
            <person name="Zhang X."/>
            <person name="Ji Z."/>
            <person name="Zhao W."/>
            <person name="Sun Y."/>
            <person name="Zhang Z."/>
            <person name="Bao J."/>
            <person name="Han Y."/>
            <person name="Dong L."/>
            <person name="Ji J."/>
            <person name="Chen P."/>
            <person name="Wu S."/>
            <person name="Liu J."/>
            <person name="Xiao Y."/>
            <person name="Bu D."/>
            <person name="Tan J."/>
            <person name="Yang L."/>
            <person name="Ye C."/>
            <person name="Zhang J."/>
            <person name="Xu J."/>
            <person name="Zhou Y."/>
            <person name="Yu Y."/>
            <person name="Zhang B."/>
            <person name="Zhuang S."/>
            <person name="Wei H."/>
            <person name="Liu B."/>
            <person name="Lei M."/>
            <person name="Yu H."/>
            <person name="Li Y."/>
            <person name="Xu H."/>
            <person name="Wei S."/>
            <person name="He X."/>
            <person name="Fang L."/>
            <person name="Zhang Z."/>
            <person name="Zhang Y."/>
            <person name="Huang X."/>
            <person name="Su Z."/>
            <person name="Tong W."/>
            <person name="Li J."/>
            <person name="Tong Z."/>
            <person name="Li S."/>
            <person name="Ye J."/>
            <person name="Wang L."/>
            <person name="Fang L."/>
            <person name="Lei T."/>
            <person name="Chen C.-S."/>
            <person name="Chen H.-C."/>
            <person name="Xu Z."/>
            <person name="Li H."/>
            <person name="Huang H."/>
            <person name="Zhang F."/>
            <person name="Xu H."/>
            <person name="Li N."/>
            <person name="Zhao C."/>
            <person name="Li S."/>
            <person name="Dong L."/>
            <person name="Huang Y."/>
            <person name="Li L."/>
            <person name="Xi Y."/>
            <person name="Qi Q."/>
            <person name="Li W."/>
            <person name="Zhang B."/>
            <person name="Hu W."/>
            <person name="Zhang Y."/>
            <person name="Tian X."/>
            <person name="Jiao Y."/>
            <person name="Liang X."/>
            <person name="Jin J."/>
            <person name="Gao L."/>
            <person name="Zheng W."/>
            <person name="Hao B."/>
            <person name="Liu S.-M."/>
            <person name="Wang W."/>
            <person name="Yuan L."/>
            <person name="Cao M."/>
            <person name="McDermott J."/>
            <person name="Samudrala R."/>
            <person name="Wang J."/>
            <person name="Wong G.K.-S."/>
            <person name="Yang H."/>
        </authorList>
    </citation>
    <scope>NUCLEOTIDE SEQUENCE [LARGE SCALE GENOMIC DNA]</scope>
    <source>
        <strain>cv. Nipponbare</strain>
    </source>
</reference>
<reference key="5">
    <citation type="journal article" date="2003" name="Science">
        <title>Collection, mapping, and annotation of over 28,000 cDNA clones from japonica rice.</title>
        <authorList>
            <consortium name="The rice full-length cDNA consortium"/>
        </authorList>
    </citation>
    <scope>NUCLEOTIDE SEQUENCE [LARGE SCALE MRNA]</scope>
    <source>
        <strain>cv. Nipponbare</strain>
    </source>
</reference>
<reference key="6">
    <citation type="journal article" date="2010" name="Plant Physiol.">
        <title>Characterization of the rice PHO1 gene family reveals a key role for OsPHO1;2 in phosphate homeostasis and the evolution of a distinct clade in dicotyledons.</title>
        <authorList>
            <person name="Secco D."/>
            <person name="Baumann A."/>
            <person name="Poirier Y."/>
        </authorList>
    </citation>
    <scope>FUNCTION</scope>
    <scope>TISSUE SPECIFICITY</scope>
    <scope>INDUCTION</scope>
    <scope>GENE FAMILY</scope>
    <scope>NOMENCLATURE</scope>
    <scope>DISRUPTION PHENOTYPE</scope>
</reference>